<reference key="1">
    <citation type="submission" date="2007-05" db="EMBL/GenBank/DDBJ databases">
        <title>Complete sequence of chromosome of Staphylococcus aureus subsp. aureus JH9.</title>
        <authorList>
            <consortium name="US DOE Joint Genome Institute"/>
            <person name="Copeland A."/>
            <person name="Lucas S."/>
            <person name="Lapidus A."/>
            <person name="Barry K."/>
            <person name="Detter J.C."/>
            <person name="Glavina del Rio T."/>
            <person name="Hammon N."/>
            <person name="Israni S."/>
            <person name="Pitluck S."/>
            <person name="Chain P."/>
            <person name="Malfatti S."/>
            <person name="Shin M."/>
            <person name="Vergez L."/>
            <person name="Schmutz J."/>
            <person name="Larimer F."/>
            <person name="Land M."/>
            <person name="Hauser L."/>
            <person name="Kyrpides N."/>
            <person name="Kim E."/>
            <person name="Tomasz A."/>
            <person name="Richardson P."/>
        </authorList>
    </citation>
    <scope>NUCLEOTIDE SEQUENCE [LARGE SCALE GENOMIC DNA]</scope>
    <source>
        <strain>JH9</strain>
    </source>
</reference>
<sequence>MTATWEKKEGNEGLLTVTVPAEKVNKALDQAFKKVVKQINVPGFRKGKVPRPIFEQRFGVEALYQDAIDILLPDAYGEAIDETDIKPVAQPEVSVTQIEKGKDFIFEATVTVEPEVKLGDYKGLEIEKQETELSDDELQEAIDHSLGHLAEMVVKEDGVVENGDTVNIDFSGSVDGEEFEGGQAEGYDLEIGSGSFIPGFEEQLEGMKVDEEKDVVVTFPEEYHAEELAGKEATFKTKVNEIKFKEVPELTDEIANELDAEANTVDEYKENLRKRLAEQKATDAENVEKEEAITKATDNTTIDIPEAMVNTELDRMVSEFAQRIQQQGLDLQTYFQISGQDETQLREQMKDDAEQRVKTNLTLTAIAEAEKIEATDEDIDKELEKMSKQFNISVEDIKNTLGNTDIIKNDVRIQKVIDLLRDNAKFVEGTKED</sequence>
<gene>
    <name evidence="1" type="primary">tig</name>
    <name type="ordered locus">SaurJH9_1733</name>
</gene>
<name>TIG_STAA9</name>
<feature type="chain" id="PRO_1000079061" description="Trigger factor">
    <location>
        <begin position="1"/>
        <end position="433"/>
    </location>
</feature>
<feature type="domain" description="PPIase FKBP-type" evidence="1">
    <location>
        <begin position="163"/>
        <end position="248"/>
    </location>
</feature>
<comment type="function">
    <text evidence="1">Involved in protein export. Acts as a chaperone by maintaining the newly synthesized protein in an open conformation. Functions as a peptidyl-prolyl cis-trans isomerase.</text>
</comment>
<comment type="catalytic activity">
    <reaction evidence="1">
        <text>[protein]-peptidylproline (omega=180) = [protein]-peptidylproline (omega=0)</text>
        <dbReference type="Rhea" id="RHEA:16237"/>
        <dbReference type="Rhea" id="RHEA-COMP:10747"/>
        <dbReference type="Rhea" id="RHEA-COMP:10748"/>
        <dbReference type="ChEBI" id="CHEBI:83833"/>
        <dbReference type="ChEBI" id="CHEBI:83834"/>
        <dbReference type="EC" id="5.2.1.8"/>
    </reaction>
</comment>
<comment type="subcellular location">
    <subcellularLocation>
        <location>Cytoplasm</location>
    </subcellularLocation>
    <text evidence="1">About half TF is bound to the ribosome near the polypeptide exit tunnel while the other half is free in the cytoplasm.</text>
</comment>
<comment type="domain">
    <text evidence="1">Consists of 3 domains; the N-terminus binds the ribosome, the middle domain has PPIase activity, while the C-terminus has intrinsic chaperone activity on its own.</text>
</comment>
<comment type="similarity">
    <text evidence="1">Belongs to the FKBP-type PPIase family. Tig subfamily.</text>
</comment>
<keyword id="KW-0131">Cell cycle</keyword>
<keyword id="KW-0132">Cell division</keyword>
<keyword id="KW-0143">Chaperone</keyword>
<keyword id="KW-0963">Cytoplasm</keyword>
<keyword id="KW-0413">Isomerase</keyword>
<keyword id="KW-0697">Rotamase</keyword>
<organism>
    <name type="scientific">Staphylococcus aureus (strain JH9)</name>
    <dbReference type="NCBI Taxonomy" id="359786"/>
    <lineage>
        <taxon>Bacteria</taxon>
        <taxon>Bacillati</taxon>
        <taxon>Bacillota</taxon>
        <taxon>Bacilli</taxon>
        <taxon>Bacillales</taxon>
        <taxon>Staphylococcaceae</taxon>
        <taxon>Staphylococcus</taxon>
    </lineage>
</organism>
<accession>A5ITK0</accession>
<dbReference type="EC" id="5.2.1.8" evidence="1"/>
<dbReference type="EMBL" id="CP000703">
    <property type="protein sequence ID" value="ABQ49523.1"/>
    <property type="molecule type" value="Genomic_DNA"/>
</dbReference>
<dbReference type="RefSeq" id="WP_000127573.1">
    <property type="nucleotide sequence ID" value="NC_009487.1"/>
</dbReference>
<dbReference type="SMR" id="A5ITK0"/>
<dbReference type="KEGG" id="saj:SaurJH9_1733"/>
<dbReference type="HOGENOM" id="CLU_033058_3_2_9"/>
<dbReference type="GO" id="GO:0005737">
    <property type="term" value="C:cytoplasm"/>
    <property type="evidence" value="ECO:0007669"/>
    <property type="project" value="UniProtKB-SubCell"/>
</dbReference>
<dbReference type="GO" id="GO:0003755">
    <property type="term" value="F:peptidyl-prolyl cis-trans isomerase activity"/>
    <property type="evidence" value="ECO:0007669"/>
    <property type="project" value="UniProtKB-UniRule"/>
</dbReference>
<dbReference type="GO" id="GO:0044183">
    <property type="term" value="F:protein folding chaperone"/>
    <property type="evidence" value="ECO:0007669"/>
    <property type="project" value="TreeGrafter"/>
</dbReference>
<dbReference type="GO" id="GO:0043022">
    <property type="term" value="F:ribosome binding"/>
    <property type="evidence" value="ECO:0007669"/>
    <property type="project" value="TreeGrafter"/>
</dbReference>
<dbReference type="GO" id="GO:0051083">
    <property type="term" value="P:'de novo' cotranslational protein folding"/>
    <property type="evidence" value="ECO:0007669"/>
    <property type="project" value="TreeGrafter"/>
</dbReference>
<dbReference type="GO" id="GO:0051301">
    <property type="term" value="P:cell division"/>
    <property type="evidence" value="ECO:0007669"/>
    <property type="project" value="UniProtKB-KW"/>
</dbReference>
<dbReference type="GO" id="GO:0061077">
    <property type="term" value="P:chaperone-mediated protein folding"/>
    <property type="evidence" value="ECO:0007669"/>
    <property type="project" value="TreeGrafter"/>
</dbReference>
<dbReference type="GO" id="GO:0015031">
    <property type="term" value="P:protein transport"/>
    <property type="evidence" value="ECO:0007669"/>
    <property type="project" value="UniProtKB-UniRule"/>
</dbReference>
<dbReference type="GO" id="GO:0043335">
    <property type="term" value="P:protein unfolding"/>
    <property type="evidence" value="ECO:0007669"/>
    <property type="project" value="TreeGrafter"/>
</dbReference>
<dbReference type="FunFam" id="3.10.50.40:FF:000001">
    <property type="entry name" value="Trigger factor"/>
    <property type="match status" value="1"/>
</dbReference>
<dbReference type="FunFam" id="3.30.70.1050:FF:000002">
    <property type="entry name" value="Trigger factor"/>
    <property type="match status" value="1"/>
</dbReference>
<dbReference type="Gene3D" id="3.10.50.40">
    <property type="match status" value="1"/>
</dbReference>
<dbReference type="Gene3D" id="3.30.70.1050">
    <property type="entry name" value="Trigger factor ribosome-binding domain"/>
    <property type="match status" value="1"/>
</dbReference>
<dbReference type="Gene3D" id="1.10.3120.10">
    <property type="entry name" value="Trigger factor, C-terminal domain"/>
    <property type="match status" value="1"/>
</dbReference>
<dbReference type="HAMAP" id="MF_00303">
    <property type="entry name" value="Trigger_factor_Tig"/>
    <property type="match status" value="1"/>
</dbReference>
<dbReference type="InterPro" id="IPR046357">
    <property type="entry name" value="PPIase_dom_sf"/>
</dbReference>
<dbReference type="InterPro" id="IPR001179">
    <property type="entry name" value="PPIase_FKBP_dom"/>
</dbReference>
<dbReference type="InterPro" id="IPR005215">
    <property type="entry name" value="Trig_fac"/>
</dbReference>
<dbReference type="InterPro" id="IPR008880">
    <property type="entry name" value="Trigger_fac_C"/>
</dbReference>
<dbReference type="InterPro" id="IPR037041">
    <property type="entry name" value="Trigger_fac_C_sf"/>
</dbReference>
<dbReference type="InterPro" id="IPR008881">
    <property type="entry name" value="Trigger_fac_ribosome-bd_bac"/>
</dbReference>
<dbReference type="InterPro" id="IPR036611">
    <property type="entry name" value="Trigger_fac_ribosome-bd_sf"/>
</dbReference>
<dbReference type="InterPro" id="IPR027304">
    <property type="entry name" value="Trigger_fact/SurA_dom_sf"/>
</dbReference>
<dbReference type="NCBIfam" id="TIGR00115">
    <property type="entry name" value="tig"/>
    <property type="match status" value="1"/>
</dbReference>
<dbReference type="PANTHER" id="PTHR30560">
    <property type="entry name" value="TRIGGER FACTOR CHAPERONE AND PEPTIDYL-PROLYL CIS/TRANS ISOMERASE"/>
    <property type="match status" value="1"/>
</dbReference>
<dbReference type="PANTHER" id="PTHR30560:SF3">
    <property type="entry name" value="TRIGGER FACTOR-LIKE PROTEIN TIG, CHLOROPLASTIC"/>
    <property type="match status" value="1"/>
</dbReference>
<dbReference type="Pfam" id="PF00254">
    <property type="entry name" value="FKBP_C"/>
    <property type="match status" value="1"/>
</dbReference>
<dbReference type="Pfam" id="PF05698">
    <property type="entry name" value="Trigger_C"/>
    <property type="match status" value="1"/>
</dbReference>
<dbReference type="Pfam" id="PF05697">
    <property type="entry name" value="Trigger_N"/>
    <property type="match status" value="1"/>
</dbReference>
<dbReference type="PIRSF" id="PIRSF003095">
    <property type="entry name" value="Trigger_factor"/>
    <property type="match status" value="1"/>
</dbReference>
<dbReference type="SUPFAM" id="SSF54534">
    <property type="entry name" value="FKBP-like"/>
    <property type="match status" value="1"/>
</dbReference>
<dbReference type="SUPFAM" id="SSF109998">
    <property type="entry name" value="Triger factor/SurA peptide-binding domain-like"/>
    <property type="match status" value="1"/>
</dbReference>
<dbReference type="SUPFAM" id="SSF102735">
    <property type="entry name" value="Trigger factor ribosome-binding domain"/>
    <property type="match status" value="1"/>
</dbReference>
<dbReference type="PROSITE" id="PS50059">
    <property type="entry name" value="FKBP_PPIASE"/>
    <property type="match status" value="1"/>
</dbReference>
<proteinExistence type="inferred from homology"/>
<evidence type="ECO:0000255" key="1">
    <source>
        <dbReference type="HAMAP-Rule" id="MF_00303"/>
    </source>
</evidence>
<protein>
    <recommendedName>
        <fullName evidence="1">Trigger factor</fullName>
        <shortName evidence="1">TF</shortName>
        <ecNumber evidence="1">5.2.1.8</ecNumber>
    </recommendedName>
    <alternativeName>
        <fullName evidence="1">PPIase</fullName>
    </alternativeName>
</protein>